<sequence length="229" mass="27512">MSSLRNAIQRRAHKERAQPESRKKFGLLEKHKDYIVRAKAFHQKEETIRKLKEKASFRNPDEFYFKMINSKTVDGIHRPKPEANKYTEDELMLLKTKDMGYILQGIQSEKKKIEKLSSMLHELDNKRPNKHVYFAEDREEVKEIQSRIEQKSSSLGLDNIPSRIKRKTASSYRELEERKQRVQKLEKLYADMALQKELKKPGRKRKLREDEIENQTSRPVYKWRAQRKR</sequence>
<gene>
    <name type="ordered locus">Os01g0810000</name>
    <name type="ordered locus">LOC_Os01g59500</name>
    <name evidence="4" type="ORF">OsJ_03819</name>
    <name type="ORF">P0468B07.32-1</name>
    <name type="ORF">P0468B07.32-2</name>
</gene>
<proteinExistence type="evidence at transcript level"/>
<comment type="function">
    <text evidence="1">Involved in nucleolar processing of pre-18S ribosomal RNA.</text>
</comment>
<comment type="subunit">
    <text evidence="1">Component of the ribosomal small subunit (SSU) processome.</text>
</comment>
<comment type="subcellular location">
    <subcellularLocation>
        <location evidence="1">Nucleus</location>
        <location evidence="1">Nucleolus</location>
    </subcellularLocation>
</comment>
<comment type="similarity">
    <text evidence="3">Belongs to the UTP11 family.</text>
</comment>
<evidence type="ECO:0000250" key="1"/>
<evidence type="ECO:0000256" key="2">
    <source>
        <dbReference type="SAM" id="MobiDB-lite"/>
    </source>
</evidence>
<evidence type="ECO:0000305" key="3"/>
<evidence type="ECO:0000312" key="4">
    <source>
        <dbReference type="EMBL" id="EEE55555.1"/>
    </source>
</evidence>
<protein>
    <recommendedName>
        <fullName>Probable U3 small nucleolar RNA-associated protein 11</fullName>
        <shortName>U3 snoRNA-associated protein 11</shortName>
    </recommendedName>
</protein>
<feature type="chain" id="PRO_0000211050" description="Probable U3 small nucleolar RNA-associated protein 11">
    <location>
        <begin position="1"/>
        <end position="229"/>
    </location>
</feature>
<feature type="region of interest" description="Disordered" evidence="2">
    <location>
        <begin position="1"/>
        <end position="23"/>
    </location>
</feature>
<feature type="region of interest" description="Disordered" evidence="2">
    <location>
        <begin position="199"/>
        <end position="229"/>
    </location>
</feature>
<organism>
    <name type="scientific">Oryza sativa subsp. japonica</name>
    <name type="common">Rice</name>
    <dbReference type="NCBI Taxonomy" id="39947"/>
    <lineage>
        <taxon>Eukaryota</taxon>
        <taxon>Viridiplantae</taxon>
        <taxon>Streptophyta</taxon>
        <taxon>Embryophyta</taxon>
        <taxon>Tracheophyta</taxon>
        <taxon>Spermatophyta</taxon>
        <taxon>Magnoliopsida</taxon>
        <taxon>Liliopsida</taxon>
        <taxon>Poales</taxon>
        <taxon>Poaceae</taxon>
        <taxon>BOP clade</taxon>
        <taxon>Oryzoideae</taxon>
        <taxon>Oryzeae</taxon>
        <taxon>Oryzinae</taxon>
        <taxon>Oryza</taxon>
        <taxon>Oryza sativa</taxon>
    </lineage>
</organism>
<accession>Q8S1Z1</accession>
<accession>Q0JID4</accession>
<accession>Q5VQN9</accession>
<dbReference type="EMBL" id="AP003260">
    <property type="protein sequence ID" value="BAD68234.1"/>
    <property type="molecule type" value="Genomic_DNA"/>
</dbReference>
<dbReference type="EMBL" id="AP003260">
    <property type="protein sequence ID" value="BAD68235.1"/>
    <property type="molecule type" value="Genomic_DNA"/>
</dbReference>
<dbReference type="EMBL" id="AP008207">
    <property type="protein sequence ID" value="BAF06494.1"/>
    <property type="molecule type" value="Genomic_DNA"/>
</dbReference>
<dbReference type="EMBL" id="AP014957">
    <property type="protein sequence ID" value="BAS74863.1"/>
    <property type="molecule type" value="Genomic_DNA"/>
</dbReference>
<dbReference type="EMBL" id="AP014957">
    <property type="protein sequence ID" value="BAS74864.1"/>
    <property type="molecule type" value="Genomic_DNA"/>
</dbReference>
<dbReference type="EMBL" id="CM000138">
    <property type="protein sequence ID" value="EEE55555.1"/>
    <property type="molecule type" value="Genomic_DNA"/>
</dbReference>
<dbReference type="EMBL" id="AK102143">
    <property type="protein sequence ID" value="BAG95410.1"/>
    <property type="molecule type" value="mRNA"/>
</dbReference>
<dbReference type="EMBL" id="AK120752">
    <property type="protein sequence ID" value="BAH00155.1"/>
    <property type="molecule type" value="mRNA"/>
</dbReference>
<dbReference type="RefSeq" id="XP_015648861.1">
    <property type="nucleotide sequence ID" value="XM_015793375.1"/>
</dbReference>
<dbReference type="RefSeq" id="XP_015648867.1">
    <property type="nucleotide sequence ID" value="XM_015793381.1"/>
</dbReference>
<dbReference type="SMR" id="Q8S1Z1"/>
<dbReference type="FunCoup" id="Q8S1Z1">
    <property type="interactions" value="2445"/>
</dbReference>
<dbReference type="STRING" id="39947.Q8S1Z1"/>
<dbReference type="PaxDb" id="39947-Q8S1Z1"/>
<dbReference type="EnsemblPlants" id="Os01t0810000-01">
    <property type="protein sequence ID" value="Os01t0810000-01"/>
    <property type="gene ID" value="Os01g0810000"/>
</dbReference>
<dbReference type="EnsemblPlants" id="Os01t0810000-02">
    <property type="protein sequence ID" value="Os01t0810000-02"/>
    <property type="gene ID" value="Os01g0810000"/>
</dbReference>
<dbReference type="Gramene" id="Os01t0810000-01">
    <property type="protein sequence ID" value="Os01t0810000-01"/>
    <property type="gene ID" value="Os01g0810000"/>
</dbReference>
<dbReference type="Gramene" id="Os01t0810000-02">
    <property type="protein sequence ID" value="Os01t0810000-02"/>
    <property type="gene ID" value="Os01g0810000"/>
</dbReference>
<dbReference type="KEGG" id="dosa:Os01g0810000"/>
<dbReference type="eggNOG" id="KOG3237">
    <property type="taxonomic scope" value="Eukaryota"/>
</dbReference>
<dbReference type="HOGENOM" id="CLU_061887_1_0_1"/>
<dbReference type="InParanoid" id="Q8S1Z1"/>
<dbReference type="OMA" id="DLKYVVM"/>
<dbReference type="OrthoDB" id="29058at2759"/>
<dbReference type="Proteomes" id="UP000000763">
    <property type="component" value="Chromosome 1"/>
</dbReference>
<dbReference type="Proteomes" id="UP000007752">
    <property type="component" value="Chromosome 1"/>
</dbReference>
<dbReference type="Proteomes" id="UP000059680">
    <property type="component" value="Chromosome 1"/>
</dbReference>
<dbReference type="GO" id="GO:0005730">
    <property type="term" value="C:nucleolus"/>
    <property type="evidence" value="ECO:0000318"/>
    <property type="project" value="GO_Central"/>
</dbReference>
<dbReference type="GO" id="GO:0032040">
    <property type="term" value="C:small-subunit processome"/>
    <property type="evidence" value="ECO:0000318"/>
    <property type="project" value="GO_Central"/>
</dbReference>
<dbReference type="GO" id="GO:0009561">
    <property type="term" value="P:megagametogenesis"/>
    <property type="evidence" value="ECO:0007669"/>
    <property type="project" value="EnsemblPlants"/>
</dbReference>
<dbReference type="GO" id="GO:0006364">
    <property type="term" value="P:rRNA processing"/>
    <property type="evidence" value="ECO:0007669"/>
    <property type="project" value="UniProtKB-KW"/>
</dbReference>
<dbReference type="InterPro" id="IPR007144">
    <property type="entry name" value="SSU_processome_Utp11"/>
</dbReference>
<dbReference type="PANTHER" id="PTHR12838">
    <property type="entry name" value="U3 SMALL NUCLEOLAR RNA-ASSOCIATED PROTEIN 11"/>
    <property type="match status" value="1"/>
</dbReference>
<dbReference type="PANTHER" id="PTHR12838:SF0">
    <property type="entry name" value="U3 SMALL NUCLEOLAR RNA-ASSOCIATED PROTEIN 11-RELATED"/>
    <property type="match status" value="1"/>
</dbReference>
<dbReference type="Pfam" id="PF03998">
    <property type="entry name" value="Utp11"/>
    <property type="match status" value="1"/>
</dbReference>
<dbReference type="PIRSF" id="PIRSF015952">
    <property type="entry name" value="U3snoRNP11"/>
    <property type="match status" value="1"/>
</dbReference>
<name>UTP11_ORYSJ</name>
<reference key="1">
    <citation type="journal article" date="2002" name="Nature">
        <title>The genome sequence and structure of rice chromosome 1.</title>
        <authorList>
            <person name="Sasaki T."/>
            <person name="Matsumoto T."/>
            <person name="Yamamoto K."/>
            <person name="Sakata K."/>
            <person name="Baba T."/>
            <person name="Katayose Y."/>
            <person name="Wu J."/>
            <person name="Niimura Y."/>
            <person name="Cheng Z."/>
            <person name="Nagamura Y."/>
            <person name="Antonio B.A."/>
            <person name="Kanamori H."/>
            <person name="Hosokawa S."/>
            <person name="Masukawa M."/>
            <person name="Arikawa K."/>
            <person name="Chiden Y."/>
            <person name="Hayashi M."/>
            <person name="Okamoto M."/>
            <person name="Ando T."/>
            <person name="Aoki H."/>
            <person name="Arita K."/>
            <person name="Hamada M."/>
            <person name="Harada C."/>
            <person name="Hijishita S."/>
            <person name="Honda M."/>
            <person name="Ichikawa Y."/>
            <person name="Idonuma A."/>
            <person name="Iijima M."/>
            <person name="Ikeda M."/>
            <person name="Ikeno M."/>
            <person name="Ito S."/>
            <person name="Ito T."/>
            <person name="Ito Y."/>
            <person name="Ito Y."/>
            <person name="Iwabuchi A."/>
            <person name="Kamiya K."/>
            <person name="Karasawa W."/>
            <person name="Katagiri S."/>
            <person name="Kikuta A."/>
            <person name="Kobayashi N."/>
            <person name="Kono I."/>
            <person name="Machita K."/>
            <person name="Maehara T."/>
            <person name="Mizuno H."/>
            <person name="Mizubayashi T."/>
            <person name="Mukai Y."/>
            <person name="Nagasaki H."/>
            <person name="Nakashima M."/>
            <person name="Nakama Y."/>
            <person name="Nakamichi Y."/>
            <person name="Nakamura M."/>
            <person name="Namiki N."/>
            <person name="Negishi M."/>
            <person name="Ohta I."/>
            <person name="Ono N."/>
            <person name="Saji S."/>
            <person name="Sakai K."/>
            <person name="Shibata M."/>
            <person name="Shimokawa T."/>
            <person name="Shomura A."/>
            <person name="Song J."/>
            <person name="Takazaki Y."/>
            <person name="Terasawa K."/>
            <person name="Tsuji K."/>
            <person name="Waki K."/>
            <person name="Yamagata H."/>
            <person name="Yamane H."/>
            <person name="Yoshiki S."/>
            <person name="Yoshihara R."/>
            <person name="Yukawa K."/>
            <person name="Zhong H."/>
            <person name="Iwama H."/>
            <person name="Endo T."/>
            <person name="Ito H."/>
            <person name="Hahn J.H."/>
            <person name="Kim H.-I."/>
            <person name="Eun M.-Y."/>
            <person name="Yano M."/>
            <person name="Jiang J."/>
            <person name="Gojobori T."/>
        </authorList>
    </citation>
    <scope>NUCLEOTIDE SEQUENCE [LARGE SCALE GENOMIC DNA]</scope>
    <source>
        <strain>cv. Nipponbare</strain>
    </source>
</reference>
<reference key="2">
    <citation type="journal article" date="2005" name="Nature">
        <title>The map-based sequence of the rice genome.</title>
        <authorList>
            <consortium name="International rice genome sequencing project (IRGSP)"/>
        </authorList>
    </citation>
    <scope>NUCLEOTIDE SEQUENCE [LARGE SCALE GENOMIC DNA]</scope>
    <source>
        <strain>cv. Nipponbare</strain>
    </source>
</reference>
<reference key="3">
    <citation type="journal article" date="2008" name="Nucleic Acids Res.">
        <title>The rice annotation project database (RAP-DB): 2008 update.</title>
        <authorList>
            <consortium name="The rice annotation project (RAP)"/>
        </authorList>
    </citation>
    <scope>GENOME REANNOTATION</scope>
    <source>
        <strain>cv. Nipponbare</strain>
    </source>
</reference>
<reference key="4">
    <citation type="journal article" date="2013" name="Rice">
        <title>Improvement of the Oryza sativa Nipponbare reference genome using next generation sequence and optical map data.</title>
        <authorList>
            <person name="Kawahara Y."/>
            <person name="de la Bastide M."/>
            <person name="Hamilton J.P."/>
            <person name="Kanamori H."/>
            <person name="McCombie W.R."/>
            <person name="Ouyang S."/>
            <person name="Schwartz D.C."/>
            <person name="Tanaka T."/>
            <person name="Wu J."/>
            <person name="Zhou S."/>
            <person name="Childs K.L."/>
            <person name="Davidson R.M."/>
            <person name="Lin H."/>
            <person name="Quesada-Ocampo L."/>
            <person name="Vaillancourt B."/>
            <person name="Sakai H."/>
            <person name="Lee S.S."/>
            <person name="Kim J."/>
            <person name="Numa H."/>
            <person name="Itoh T."/>
            <person name="Buell C.R."/>
            <person name="Matsumoto T."/>
        </authorList>
    </citation>
    <scope>GENOME REANNOTATION</scope>
    <source>
        <strain>cv. Nipponbare</strain>
    </source>
</reference>
<reference key="5">
    <citation type="journal article" date="2005" name="PLoS Biol.">
        <title>The genomes of Oryza sativa: a history of duplications.</title>
        <authorList>
            <person name="Yu J."/>
            <person name="Wang J."/>
            <person name="Lin W."/>
            <person name="Li S."/>
            <person name="Li H."/>
            <person name="Zhou J."/>
            <person name="Ni P."/>
            <person name="Dong W."/>
            <person name="Hu S."/>
            <person name="Zeng C."/>
            <person name="Zhang J."/>
            <person name="Zhang Y."/>
            <person name="Li R."/>
            <person name="Xu Z."/>
            <person name="Li S."/>
            <person name="Li X."/>
            <person name="Zheng H."/>
            <person name="Cong L."/>
            <person name="Lin L."/>
            <person name="Yin J."/>
            <person name="Geng J."/>
            <person name="Li G."/>
            <person name="Shi J."/>
            <person name="Liu J."/>
            <person name="Lv H."/>
            <person name="Li J."/>
            <person name="Wang J."/>
            <person name="Deng Y."/>
            <person name="Ran L."/>
            <person name="Shi X."/>
            <person name="Wang X."/>
            <person name="Wu Q."/>
            <person name="Li C."/>
            <person name="Ren X."/>
            <person name="Wang J."/>
            <person name="Wang X."/>
            <person name="Li D."/>
            <person name="Liu D."/>
            <person name="Zhang X."/>
            <person name="Ji Z."/>
            <person name="Zhao W."/>
            <person name="Sun Y."/>
            <person name="Zhang Z."/>
            <person name="Bao J."/>
            <person name="Han Y."/>
            <person name="Dong L."/>
            <person name="Ji J."/>
            <person name="Chen P."/>
            <person name="Wu S."/>
            <person name="Liu J."/>
            <person name="Xiao Y."/>
            <person name="Bu D."/>
            <person name="Tan J."/>
            <person name="Yang L."/>
            <person name="Ye C."/>
            <person name="Zhang J."/>
            <person name="Xu J."/>
            <person name="Zhou Y."/>
            <person name="Yu Y."/>
            <person name="Zhang B."/>
            <person name="Zhuang S."/>
            <person name="Wei H."/>
            <person name="Liu B."/>
            <person name="Lei M."/>
            <person name="Yu H."/>
            <person name="Li Y."/>
            <person name="Xu H."/>
            <person name="Wei S."/>
            <person name="He X."/>
            <person name="Fang L."/>
            <person name="Zhang Z."/>
            <person name="Zhang Y."/>
            <person name="Huang X."/>
            <person name="Su Z."/>
            <person name="Tong W."/>
            <person name="Li J."/>
            <person name="Tong Z."/>
            <person name="Li S."/>
            <person name="Ye J."/>
            <person name="Wang L."/>
            <person name="Fang L."/>
            <person name="Lei T."/>
            <person name="Chen C.-S."/>
            <person name="Chen H.-C."/>
            <person name="Xu Z."/>
            <person name="Li H."/>
            <person name="Huang H."/>
            <person name="Zhang F."/>
            <person name="Xu H."/>
            <person name="Li N."/>
            <person name="Zhao C."/>
            <person name="Li S."/>
            <person name="Dong L."/>
            <person name="Huang Y."/>
            <person name="Li L."/>
            <person name="Xi Y."/>
            <person name="Qi Q."/>
            <person name="Li W."/>
            <person name="Zhang B."/>
            <person name="Hu W."/>
            <person name="Zhang Y."/>
            <person name="Tian X."/>
            <person name="Jiao Y."/>
            <person name="Liang X."/>
            <person name="Jin J."/>
            <person name="Gao L."/>
            <person name="Zheng W."/>
            <person name="Hao B."/>
            <person name="Liu S.-M."/>
            <person name="Wang W."/>
            <person name="Yuan L."/>
            <person name="Cao M."/>
            <person name="McDermott J."/>
            <person name="Samudrala R."/>
            <person name="Wang J."/>
            <person name="Wong G.K.-S."/>
            <person name="Yang H."/>
        </authorList>
    </citation>
    <scope>NUCLEOTIDE SEQUENCE [LARGE SCALE GENOMIC DNA]</scope>
    <source>
        <strain>cv. Nipponbare</strain>
    </source>
</reference>
<reference key="6">
    <citation type="journal article" date="2003" name="Science">
        <title>Collection, mapping, and annotation of over 28,000 cDNA clones from japonica rice.</title>
        <authorList>
            <consortium name="The rice full-length cDNA consortium"/>
        </authorList>
    </citation>
    <scope>NUCLEOTIDE SEQUENCE [LARGE SCALE MRNA]</scope>
    <source>
        <strain>cv. Nipponbare</strain>
    </source>
</reference>
<keyword id="KW-0539">Nucleus</keyword>
<keyword id="KW-1185">Reference proteome</keyword>
<keyword id="KW-0698">rRNA processing</keyword>